<accession>Q88PB9</accession>
<keyword id="KW-0067">ATP-binding</keyword>
<keyword id="KW-0436">Ligase</keyword>
<keyword id="KW-0547">Nucleotide-binding</keyword>
<keyword id="KW-0648">Protein biosynthesis</keyword>
<keyword id="KW-1185">Reference proteome</keyword>
<sequence length="483" mass="51518">MHQLTLAEIARGLADKSFSSEELTGALLARIKQLDPQINSFISVTEDLALGQARAADARRAAGETSALLGAPIAHKDLFCTNGVRTSCGSKMLDNFKAPYDATVVAKLAEAGMVTLGKTNMDEFAMGSANESSHYGAVKNPWNLEHVPGGSSGGSAAAVAARLLPATTGTDTGGSIRQPAALTNLTGLKPTYGRVSRWGMIAYASSLDQGGPLARTAEDCALLLQGMAGFDAKDSTSIEEPVPDYSASLNASLQGLRIGLPKEYFGAGLDPRIADLVQASVKELEKLGAVVKEISLPNMQHAIPAYYVIAPAEASSNLSRFDGVRFGYRCEEPKDLTDLYKRSRGEGFGVEVQRRIMVGTYALSAGYYDAYYVKAQQIRRLIKNDFMAAFNDVDLILGPTTPNPAWKLGAKSSDPVAAYLEDVYTITANLAGLPGLSMPAGFVDGLPVGVQLLAPYFQEGRLLNVAHRYQQVTDWHTRAPNGF</sequence>
<protein>
    <recommendedName>
        <fullName evidence="1">Glutamyl-tRNA(Gln) amidotransferase subunit A</fullName>
        <shortName evidence="1">Glu-ADT subunit A</shortName>
        <ecNumber evidence="1">6.3.5.7</ecNumber>
    </recommendedName>
</protein>
<gene>
    <name evidence="1" type="primary">gatA</name>
    <name type="ordered locus">PP_0931</name>
</gene>
<proteinExistence type="inferred from homology"/>
<evidence type="ECO:0000255" key="1">
    <source>
        <dbReference type="HAMAP-Rule" id="MF_00120"/>
    </source>
</evidence>
<name>GATA_PSEPK</name>
<comment type="function">
    <text evidence="1">Allows the formation of correctly charged Gln-tRNA(Gln) through the transamidation of misacylated Glu-tRNA(Gln) in organisms which lack glutaminyl-tRNA synthetase. The reaction takes place in the presence of glutamine and ATP through an activated gamma-phospho-Glu-tRNA(Gln).</text>
</comment>
<comment type="catalytic activity">
    <reaction evidence="1">
        <text>L-glutamyl-tRNA(Gln) + L-glutamine + ATP + H2O = L-glutaminyl-tRNA(Gln) + L-glutamate + ADP + phosphate + H(+)</text>
        <dbReference type="Rhea" id="RHEA:17521"/>
        <dbReference type="Rhea" id="RHEA-COMP:9681"/>
        <dbReference type="Rhea" id="RHEA-COMP:9684"/>
        <dbReference type="ChEBI" id="CHEBI:15377"/>
        <dbReference type="ChEBI" id="CHEBI:15378"/>
        <dbReference type="ChEBI" id="CHEBI:29985"/>
        <dbReference type="ChEBI" id="CHEBI:30616"/>
        <dbReference type="ChEBI" id="CHEBI:43474"/>
        <dbReference type="ChEBI" id="CHEBI:58359"/>
        <dbReference type="ChEBI" id="CHEBI:78520"/>
        <dbReference type="ChEBI" id="CHEBI:78521"/>
        <dbReference type="ChEBI" id="CHEBI:456216"/>
        <dbReference type="EC" id="6.3.5.7"/>
    </reaction>
</comment>
<comment type="subunit">
    <text evidence="1">Heterotrimer of A, B and C subunits.</text>
</comment>
<comment type="similarity">
    <text evidence="1">Belongs to the amidase family. GatA subfamily.</text>
</comment>
<reference key="1">
    <citation type="journal article" date="2002" name="Environ. Microbiol.">
        <title>Complete genome sequence and comparative analysis of the metabolically versatile Pseudomonas putida KT2440.</title>
        <authorList>
            <person name="Nelson K.E."/>
            <person name="Weinel C."/>
            <person name="Paulsen I.T."/>
            <person name="Dodson R.J."/>
            <person name="Hilbert H."/>
            <person name="Martins dos Santos V.A.P."/>
            <person name="Fouts D.E."/>
            <person name="Gill S.R."/>
            <person name="Pop M."/>
            <person name="Holmes M."/>
            <person name="Brinkac L.M."/>
            <person name="Beanan M.J."/>
            <person name="DeBoy R.T."/>
            <person name="Daugherty S.C."/>
            <person name="Kolonay J.F."/>
            <person name="Madupu R."/>
            <person name="Nelson W.C."/>
            <person name="White O."/>
            <person name="Peterson J.D."/>
            <person name="Khouri H.M."/>
            <person name="Hance I."/>
            <person name="Chris Lee P."/>
            <person name="Holtzapple E.K."/>
            <person name="Scanlan D."/>
            <person name="Tran K."/>
            <person name="Moazzez A."/>
            <person name="Utterback T.R."/>
            <person name="Rizzo M."/>
            <person name="Lee K."/>
            <person name="Kosack D."/>
            <person name="Moestl D."/>
            <person name="Wedler H."/>
            <person name="Lauber J."/>
            <person name="Stjepandic D."/>
            <person name="Hoheisel J."/>
            <person name="Straetz M."/>
            <person name="Heim S."/>
            <person name="Kiewitz C."/>
            <person name="Eisen J.A."/>
            <person name="Timmis K.N."/>
            <person name="Duesterhoeft A."/>
            <person name="Tuemmler B."/>
            <person name="Fraser C.M."/>
        </authorList>
    </citation>
    <scope>NUCLEOTIDE SEQUENCE [LARGE SCALE GENOMIC DNA]</scope>
    <source>
        <strain>ATCC 47054 / DSM 6125 / CFBP 8728 / NCIMB 11950 / KT2440</strain>
    </source>
</reference>
<organism>
    <name type="scientific">Pseudomonas putida (strain ATCC 47054 / DSM 6125 / CFBP 8728 / NCIMB 11950 / KT2440)</name>
    <dbReference type="NCBI Taxonomy" id="160488"/>
    <lineage>
        <taxon>Bacteria</taxon>
        <taxon>Pseudomonadati</taxon>
        <taxon>Pseudomonadota</taxon>
        <taxon>Gammaproteobacteria</taxon>
        <taxon>Pseudomonadales</taxon>
        <taxon>Pseudomonadaceae</taxon>
        <taxon>Pseudomonas</taxon>
    </lineage>
</organism>
<dbReference type="EC" id="6.3.5.7" evidence="1"/>
<dbReference type="EMBL" id="AE015451">
    <property type="protein sequence ID" value="AAN66556.1"/>
    <property type="molecule type" value="Genomic_DNA"/>
</dbReference>
<dbReference type="RefSeq" id="NP_743092.1">
    <property type="nucleotide sequence ID" value="NC_002947.4"/>
</dbReference>
<dbReference type="RefSeq" id="WP_010952131.1">
    <property type="nucleotide sequence ID" value="NZ_CP169744.1"/>
</dbReference>
<dbReference type="SMR" id="Q88PB9"/>
<dbReference type="STRING" id="160488.PP_0931"/>
<dbReference type="PaxDb" id="160488-PP_0931"/>
<dbReference type="GeneID" id="83678284"/>
<dbReference type="KEGG" id="ppu:PP_0931"/>
<dbReference type="PATRIC" id="fig|160488.4.peg.991"/>
<dbReference type="eggNOG" id="COG0154">
    <property type="taxonomic scope" value="Bacteria"/>
</dbReference>
<dbReference type="HOGENOM" id="CLU_009600_0_3_6"/>
<dbReference type="OrthoDB" id="9811471at2"/>
<dbReference type="PhylomeDB" id="Q88PB9"/>
<dbReference type="BioCyc" id="PPUT160488:G1G01-1005-MONOMER"/>
<dbReference type="Proteomes" id="UP000000556">
    <property type="component" value="Chromosome"/>
</dbReference>
<dbReference type="GO" id="GO:0030956">
    <property type="term" value="C:glutamyl-tRNA(Gln) amidotransferase complex"/>
    <property type="evidence" value="ECO:0007669"/>
    <property type="project" value="InterPro"/>
</dbReference>
<dbReference type="GO" id="GO:0005524">
    <property type="term" value="F:ATP binding"/>
    <property type="evidence" value="ECO:0007669"/>
    <property type="project" value="UniProtKB-KW"/>
</dbReference>
<dbReference type="GO" id="GO:0050567">
    <property type="term" value="F:glutaminyl-tRNA synthase (glutamine-hydrolyzing) activity"/>
    <property type="evidence" value="ECO:0007669"/>
    <property type="project" value="UniProtKB-UniRule"/>
</dbReference>
<dbReference type="GO" id="GO:0006412">
    <property type="term" value="P:translation"/>
    <property type="evidence" value="ECO:0007669"/>
    <property type="project" value="UniProtKB-UniRule"/>
</dbReference>
<dbReference type="Gene3D" id="3.90.1300.10">
    <property type="entry name" value="Amidase signature (AS) domain"/>
    <property type="match status" value="1"/>
</dbReference>
<dbReference type="HAMAP" id="MF_00120">
    <property type="entry name" value="GatA"/>
    <property type="match status" value="1"/>
</dbReference>
<dbReference type="InterPro" id="IPR000120">
    <property type="entry name" value="Amidase"/>
</dbReference>
<dbReference type="InterPro" id="IPR020556">
    <property type="entry name" value="Amidase_CS"/>
</dbReference>
<dbReference type="InterPro" id="IPR023631">
    <property type="entry name" value="Amidase_dom"/>
</dbReference>
<dbReference type="InterPro" id="IPR036928">
    <property type="entry name" value="AS_sf"/>
</dbReference>
<dbReference type="InterPro" id="IPR004412">
    <property type="entry name" value="GatA"/>
</dbReference>
<dbReference type="NCBIfam" id="TIGR00132">
    <property type="entry name" value="gatA"/>
    <property type="match status" value="1"/>
</dbReference>
<dbReference type="PANTHER" id="PTHR11895:SF151">
    <property type="entry name" value="GLUTAMYL-TRNA(GLN) AMIDOTRANSFERASE SUBUNIT A"/>
    <property type="match status" value="1"/>
</dbReference>
<dbReference type="PANTHER" id="PTHR11895">
    <property type="entry name" value="TRANSAMIDASE"/>
    <property type="match status" value="1"/>
</dbReference>
<dbReference type="Pfam" id="PF01425">
    <property type="entry name" value="Amidase"/>
    <property type="match status" value="1"/>
</dbReference>
<dbReference type="SUPFAM" id="SSF75304">
    <property type="entry name" value="Amidase signature (AS) enzymes"/>
    <property type="match status" value="1"/>
</dbReference>
<dbReference type="PROSITE" id="PS00571">
    <property type="entry name" value="AMIDASES"/>
    <property type="match status" value="1"/>
</dbReference>
<feature type="chain" id="PRO_0000105190" description="Glutamyl-tRNA(Gln) amidotransferase subunit A">
    <location>
        <begin position="1"/>
        <end position="483"/>
    </location>
</feature>
<feature type="active site" description="Charge relay system" evidence="1">
    <location>
        <position position="76"/>
    </location>
</feature>
<feature type="active site" description="Charge relay system" evidence="1">
    <location>
        <position position="151"/>
    </location>
</feature>
<feature type="active site" description="Acyl-ester intermediate" evidence="1">
    <location>
        <position position="175"/>
    </location>
</feature>